<keyword id="KW-0002">3D-structure</keyword>
<keyword id="KW-0007">Acetylation</keyword>
<keyword id="KW-0025">Alternative splicing</keyword>
<keyword id="KW-0963">Cytoplasm</keyword>
<keyword id="KW-1024">Diamond-Blackfan anemia</keyword>
<keyword id="KW-0903">Direct protein sequencing</keyword>
<keyword id="KW-0225">Disease variant</keyword>
<keyword id="KW-1017">Isopeptide bond</keyword>
<keyword id="KW-0539">Nucleus</keyword>
<keyword id="KW-0597">Phosphoprotein</keyword>
<keyword id="KW-1267">Proteomics identification</keyword>
<keyword id="KW-1185">Reference proteome</keyword>
<keyword id="KW-0687">Ribonucleoprotein</keyword>
<keyword id="KW-0689">Ribosomal protein</keyword>
<keyword id="KW-0694">RNA-binding</keyword>
<keyword id="KW-0699">rRNA-binding</keyword>
<keyword id="KW-0832">Ubl conjugation</keyword>
<proteinExistence type="evidence at protein level"/>
<protein>
    <recommendedName>
        <fullName evidence="12">Large ribosomal subunit protein uL5</fullName>
    </recommendedName>
    <alternativeName>
        <fullName>60S ribosomal protein L11</fullName>
    </alternativeName>
    <alternativeName>
        <fullName>CLL-associated antigen KW-12</fullName>
    </alternativeName>
</protein>
<accession>P62913</accession>
<accession>P25121</accession>
<accession>P39026</accession>
<accession>Q8TDH2</accession>
<accession>Q9Y674</accession>
<dbReference type="EMBL" id="X79234">
    <property type="protein sequence ID" value="CAA55816.1"/>
    <property type="molecule type" value="mRNA"/>
</dbReference>
<dbReference type="EMBL" id="L05092">
    <property type="protein sequence ID" value="AAC15856.1"/>
    <property type="molecule type" value="mRNA"/>
</dbReference>
<dbReference type="EMBL" id="AF101385">
    <property type="protein sequence ID" value="AAD20460.3"/>
    <property type="molecule type" value="Genomic_DNA"/>
</dbReference>
<dbReference type="EMBL" id="BC018970">
    <property type="protein sequence ID" value="AAH18970.1"/>
    <property type="molecule type" value="mRNA"/>
</dbReference>
<dbReference type="EMBL" id="AF432212">
    <property type="protein sequence ID" value="AAL99919.1"/>
    <property type="molecule type" value="mRNA"/>
</dbReference>
<dbReference type="EMBL" id="AB007171">
    <property type="protein sequence ID" value="BAA25831.1"/>
    <property type="molecule type" value="Genomic_DNA"/>
</dbReference>
<dbReference type="CCDS" id="CCDS238.1"/>
<dbReference type="CCDS" id="CCDS85940.1">
    <molecule id="P62913-2"/>
</dbReference>
<dbReference type="PIR" id="S45049">
    <property type="entry name" value="S45049"/>
</dbReference>
<dbReference type="RefSeq" id="NP_000966.2">
    <molecule id="P62913-1"/>
    <property type="nucleotide sequence ID" value="NM_000975.3"/>
</dbReference>
<dbReference type="RefSeq" id="NP_001186731.1">
    <molecule id="P62913-2"/>
    <property type="nucleotide sequence ID" value="NM_001199802.1"/>
</dbReference>
<dbReference type="PDB" id="4UG0">
    <property type="method" value="EM"/>
    <property type="chains" value="LJ=1-178"/>
</dbReference>
<dbReference type="PDB" id="4V6X">
    <property type="method" value="EM"/>
    <property type="resolution" value="5.00 A"/>
    <property type="chains" value="CJ=1-178"/>
</dbReference>
<dbReference type="PDB" id="4XXB">
    <property type="method" value="X-ray"/>
    <property type="resolution" value="2.40 A"/>
    <property type="chains" value="A=1-178"/>
</dbReference>
<dbReference type="PDB" id="5AJ0">
    <property type="method" value="EM"/>
    <property type="resolution" value="3.50 A"/>
    <property type="chains" value="AJ=1-178"/>
</dbReference>
<dbReference type="PDB" id="5LKS">
    <property type="method" value="EM"/>
    <property type="resolution" value="3.60 A"/>
    <property type="chains" value="LJ=1-178"/>
</dbReference>
<dbReference type="PDB" id="5T2C">
    <property type="method" value="EM"/>
    <property type="resolution" value="3.60 A"/>
    <property type="chains" value="q=1-178"/>
</dbReference>
<dbReference type="PDB" id="6IP5">
    <property type="method" value="EM"/>
    <property type="resolution" value="3.90 A"/>
    <property type="chains" value="2E=1-178"/>
</dbReference>
<dbReference type="PDB" id="6IP6">
    <property type="method" value="EM"/>
    <property type="resolution" value="4.50 A"/>
    <property type="chains" value="2E=1-178"/>
</dbReference>
<dbReference type="PDB" id="6IP8">
    <property type="method" value="EM"/>
    <property type="resolution" value="3.90 A"/>
    <property type="chains" value="2E=1-178"/>
</dbReference>
<dbReference type="PDB" id="6LQM">
    <property type="method" value="EM"/>
    <property type="resolution" value="3.09 A"/>
    <property type="chains" value="N=1-178"/>
</dbReference>
<dbReference type="PDB" id="6LSR">
    <property type="method" value="EM"/>
    <property type="resolution" value="3.13 A"/>
    <property type="chains" value="N=1-178"/>
</dbReference>
<dbReference type="PDB" id="6LSS">
    <property type="method" value="EM"/>
    <property type="resolution" value="3.23 A"/>
    <property type="chains" value="N=1-178"/>
</dbReference>
<dbReference type="PDB" id="6LU8">
    <property type="method" value="EM"/>
    <property type="resolution" value="3.13 A"/>
    <property type="chains" value="N=1-178"/>
</dbReference>
<dbReference type="PDB" id="6OLE">
    <property type="method" value="EM"/>
    <property type="resolution" value="3.10 A"/>
    <property type="chains" value="L=9-177"/>
</dbReference>
<dbReference type="PDB" id="6OLF">
    <property type="method" value="EM"/>
    <property type="resolution" value="3.90 A"/>
    <property type="chains" value="L=9-177"/>
</dbReference>
<dbReference type="PDB" id="6OLG">
    <property type="method" value="EM"/>
    <property type="resolution" value="3.40 A"/>
    <property type="chains" value="AJ=9-177"/>
</dbReference>
<dbReference type="PDB" id="6OLI">
    <property type="method" value="EM"/>
    <property type="resolution" value="3.50 A"/>
    <property type="chains" value="L=9-177"/>
</dbReference>
<dbReference type="PDB" id="6OLZ">
    <property type="method" value="EM"/>
    <property type="resolution" value="3.90 A"/>
    <property type="chains" value="AJ=9-177"/>
</dbReference>
<dbReference type="PDB" id="6OM0">
    <property type="method" value="EM"/>
    <property type="resolution" value="3.10 A"/>
    <property type="chains" value="L=9-177"/>
</dbReference>
<dbReference type="PDB" id="6OM7">
    <property type="method" value="EM"/>
    <property type="resolution" value="3.70 A"/>
    <property type="chains" value="L=9-177"/>
</dbReference>
<dbReference type="PDB" id="6QZP">
    <property type="method" value="EM"/>
    <property type="resolution" value="2.90 A"/>
    <property type="chains" value="LJ=3-178"/>
</dbReference>
<dbReference type="PDB" id="6W6L">
    <property type="method" value="EM"/>
    <property type="resolution" value="3.84 A"/>
    <property type="chains" value="L=1-178"/>
</dbReference>
<dbReference type="PDB" id="6XA1">
    <property type="method" value="EM"/>
    <property type="resolution" value="2.80 A"/>
    <property type="chains" value="LJ=3-178"/>
</dbReference>
<dbReference type="PDB" id="6Y0G">
    <property type="method" value="EM"/>
    <property type="resolution" value="3.20 A"/>
    <property type="chains" value="LJ=1-178"/>
</dbReference>
<dbReference type="PDB" id="6Y2L">
    <property type="method" value="EM"/>
    <property type="resolution" value="3.00 A"/>
    <property type="chains" value="LJ=1-178"/>
</dbReference>
<dbReference type="PDB" id="6Y57">
    <property type="method" value="EM"/>
    <property type="resolution" value="3.50 A"/>
    <property type="chains" value="LJ=1-178"/>
</dbReference>
<dbReference type="PDB" id="6Y6X">
    <property type="method" value="EM"/>
    <property type="resolution" value="2.80 A"/>
    <property type="chains" value="LJ=3-178"/>
</dbReference>
<dbReference type="PDB" id="6Z6L">
    <property type="method" value="EM"/>
    <property type="resolution" value="3.00 A"/>
    <property type="chains" value="LJ=1-178"/>
</dbReference>
<dbReference type="PDB" id="6Z6M">
    <property type="method" value="EM"/>
    <property type="resolution" value="3.10 A"/>
    <property type="chains" value="LJ=1-178"/>
</dbReference>
<dbReference type="PDB" id="6Z6N">
    <property type="method" value="EM"/>
    <property type="resolution" value="2.90 A"/>
    <property type="chains" value="LJ=1-178"/>
</dbReference>
<dbReference type="PDB" id="6ZM7">
    <property type="method" value="EM"/>
    <property type="resolution" value="2.70 A"/>
    <property type="chains" value="LJ=1-178"/>
</dbReference>
<dbReference type="PDB" id="6ZME">
    <property type="method" value="EM"/>
    <property type="resolution" value="3.00 A"/>
    <property type="chains" value="LJ=1-178"/>
</dbReference>
<dbReference type="PDB" id="6ZMI">
    <property type="method" value="EM"/>
    <property type="resolution" value="2.60 A"/>
    <property type="chains" value="LJ=1-178"/>
</dbReference>
<dbReference type="PDB" id="6ZMO">
    <property type="method" value="EM"/>
    <property type="resolution" value="3.10 A"/>
    <property type="chains" value="LJ=1-178"/>
</dbReference>
<dbReference type="PDB" id="7BHP">
    <property type="method" value="EM"/>
    <property type="resolution" value="3.30 A"/>
    <property type="chains" value="LJ=1-178"/>
</dbReference>
<dbReference type="PDB" id="7F5S">
    <property type="method" value="EM"/>
    <property type="resolution" value="2.72 A"/>
    <property type="chains" value="LJ=1-178"/>
</dbReference>
<dbReference type="PDB" id="7OW7">
    <property type="method" value="EM"/>
    <property type="resolution" value="2.20 A"/>
    <property type="chains" value="q=1-178"/>
</dbReference>
<dbReference type="PDB" id="7QVP">
    <property type="method" value="EM"/>
    <property type="resolution" value="3.00 A"/>
    <property type="chains" value="LJ/MJ=1-178"/>
</dbReference>
<dbReference type="PDB" id="7XNX">
    <property type="method" value="EM"/>
    <property type="resolution" value="2.70 A"/>
    <property type="chains" value="LJ=1-178"/>
</dbReference>
<dbReference type="PDB" id="7XNY">
    <property type="method" value="EM"/>
    <property type="resolution" value="2.50 A"/>
    <property type="chains" value="LJ=1-178"/>
</dbReference>
<dbReference type="PDB" id="8A3D">
    <property type="method" value="EM"/>
    <property type="resolution" value="1.67 A"/>
    <property type="chains" value="q=1-178"/>
</dbReference>
<dbReference type="PDB" id="8BGU">
    <property type="method" value="EM"/>
    <property type="resolution" value="4.10 A"/>
    <property type="chains" value="B=1-178"/>
</dbReference>
<dbReference type="PDB" id="8FL0">
    <property type="method" value="EM"/>
    <property type="resolution" value="2.91 A"/>
    <property type="chains" value="L5=1-178"/>
</dbReference>
<dbReference type="PDB" id="8FL2">
    <property type="method" value="EM"/>
    <property type="resolution" value="2.67 A"/>
    <property type="chains" value="L5=1-178"/>
</dbReference>
<dbReference type="PDB" id="8FL3">
    <property type="method" value="EM"/>
    <property type="resolution" value="2.53 A"/>
    <property type="chains" value="L5=1-178"/>
</dbReference>
<dbReference type="PDB" id="8FL4">
    <property type="method" value="EM"/>
    <property type="resolution" value="2.89 A"/>
    <property type="chains" value="L5=1-178"/>
</dbReference>
<dbReference type="PDB" id="8FL6">
    <property type="method" value="EM"/>
    <property type="resolution" value="2.62 A"/>
    <property type="chains" value="L5=1-178"/>
</dbReference>
<dbReference type="PDB" id="8FL7">
    <property type="method" value="EM"/>
    <property type="resolution" value="2.55 A"/>
    <property type="chains" value="L5=1-178"/>
</dbReference>
<dbReference type="PDB" id="8FL9">
    <property type="method" value="EM"/>
    <property type="resolution" value="2.75 A"/>
    <property type="chains" value="L5=1-178"/>
</dbReference>
<dbReference type="PDB" id="8FLA">
    <property type="method" value="EM"/>
    <property type="resolution" value="2.63 A"/>
    <property type="chains" value="L5=1-178"/>
</dbReference>
<dbReference type="PDB" id="8FLB">
    <property type="method" value="EM"/>
    <property type="resolution" value="2.55 A"/>
    <property type="chains" value="L5=1-178"/>
</dbReference>
<dbReference type="PDB" id="8FLC">
    <property type="method" value="EM"/>
    <property type="resolution" value="2.76 A"/>
    <property type="chains" value="L5=1-178"/>
</dbReference>
<dbReference type="PDB" id="8FLD">
    <property type="method" value="EM"/>
    <property type="resolution" value="2.58 A"/>
    <property type="chains" value="L5=1-178"/>
</dbReference>
<dbReference type="PDB" id="8FLE">
    <property type="method" value="EM"/>
    <property type="resolution" value="2.48 A"/>
    <property type="chains" value="L5=1-178"/>
</dbReference>
<dbReference type="PDB" id="8FLF">
    <property type="method" value="EM"/>
    <property type="resolution" value="2.65 A"/>
    <property type="chains" value="L5=1-178"/>
</dbReference>
<dbReference type="PDB" id="8G5Y">
    <property type="method" value="EM"/>
    <property type="resolution" value="2.29 A"/>
    <property type="chains" value="LJ=1-178"/>
</dbReference>
<dbReference type="PDB" id="8G5Z">
    <property type="method" value="EM"/>
    <property type="resolution" value="2.64 A"/>
    <property type="chains" value="LJ=8-176"/>
</dbReference>
<dbReference type="PDB" id="8G60">
    <property type="method" value="EM"/>
    <property type="resolution" value="2.54 A"/>
    <property type="chains" value="LJ=1-178"/>
</dbReference>
<dbReference type="PDB" id="8G61">
    <property type="method" value="EM"/>
    <property type="resolution" value="2.94 A"/>
    <property type="chains" value="LJ=1-178"/>
</dbReference>
<dbReference type="PDB" id="8G6J">
    <property type="method" value="EM"/>
    <property type="resolution" value="2.80 A"/>
    <property type="chains" value="LJ=1-178"/>
</dbReference>
<dbReference type="PDB" id="8GLP">
    <property type="method" value="EM"/>
    <property type="resolution" value="1.67 A"/>
    <property type="chains" value="LJ=1-178"/>
</dbReference>
<dbReference type="PDB" id="8IDT">
    <property type="method" value="EM"/>
    <property type="resolution" value="2.80 A"/>
    <property type="chains" value="N=1-178"/>
</dbReference>
<dbReference type="PDB" id="8IDY">
    <property type="method" value="EM"/>
    <property type="resolution" value="3.00 A"/>
    <property type="chains" value="N=1-178"/>
</dbReference>
<dbReference type="PDB" id="8IE3">
    <property type="method" value="EM"/>
    <property type="resolution" value="3.30 A"/>
    <property type="chains" value="T=1-178"/>
</dbReference>
<dbReference type="PDB" id="8IFD">
    <property type="method" value="EM"/>
    <property type="resolution" value="2.59 A"/>
    <property type="chains" value="2E=1-178"/>
</dbReference>
<dbReference type="PDB" id="8IFE">
    <property type="method" value="EM"/>
    <property type="resolution" value="2.57 A"/>
    <property type="chains" value="2E=1-178"/>
</dbReference>
<dbReference type="PDB" id="8INE">
    <property type="method" value="EM"/>
    <property type="resolution" value="3.20 A"/>
    <property type="chains" value="N=1-178"/>
</dbReference>
<dbReference type="PDB" id="8INF">
    <property type="method" value="EM"/>
    <property type="resolution" value="3.00 A"/>
    <property type="chains" value="N=1-178"/>
</dbReference>
<dbReference type="PDB" id="8INK">
    <property type="method" value="EM"/>
    <property type="resolution" value="3.20 A"/>
    <property type="chains" value="C=1-178"/>
</dbReference>
<dbReference type="PDB" id="8IPD">
    <property type="method" value="EM"/>
    <property type="resolution" value="3.20 A"/>
    <property type="chains" value="C=1-178"/>
</dbReference>
<dbReference type="PDB" id="8IPX">
    <property type="method" value="EM"/>
    <property type="resolution" value="4.30 A"/>
    <property type="chains" value="C=1-178"/>
</dbReference>
<dbReference type="PDB" id="8IPY">
    <property type="method" value="EM"/>
    <property type="resolution" value="3.20 A"/>
    <property type="chains" value="C=1-178"/>
</dbReference>
<dbReference type="PDB" id="8IR1">
    <property type="method" value="EM"/>
    <property type="resolution" value="3.30 A"/>
    <property type="chains" value="A=1-178"/>
</dbReference>
<dbReference type="PDB" id="8IR3">
    <property type="method" value="EM"/>
    <property type="resolution" value="3.50 A"/>
    <property type="chains" value="A=1-178"/>
</dbReference>
<dbReference type="PDB" id="8JDJ">
    <property type="method" value="EM"/>
    <property type="resolution" value="2.50 A"/>
    <property type="chains" value="P=1-178"/>
</dbReference>
<dbReference type="PDB" id="8JDK">
    <property type="method" value="EM"/>
    <property type="resolution" value="2.26 A"/>
    <property type="chains" value="P=1-178"/>
</dbReference>
<dbReference type="PDB" id="8JDL">
    <property type="method" value="EM"/>
    <property type="resolution" value="2.42 A"/>
    <property type="chains" value="P=1-178"/>
</dbReference>
<dbReference type="PDB" id="8JDM">
    <property type="method" value="EM"/>
    <property type="resolution" value="2.67 A"/>
    <property type="chains" value="P=1-178"/>
</dbReference>
<dbReference type="PDB" id="8K2C">
    <property type="method" value="EM"/>
    <property type="resolution" value="2.40 A"/>
    <property type="chains" value="LJ=1-178"/>
</dbReference>
<dbReference type="PDB" id="8OHD">
    <property type="method" value="EM"/>
    <property type="resolution" value="3.10 A"/>
    <property type="chains" value="LJ=1-178"/>
</dbReference>
<dbReference type="PDB" id="8OJ0">
    <property type="method" value="EM"/>
    <property type="resolution" value="3.30 A"/>
    <property type="chains" value="LJ=1-178"/>
</dbReference>
<dbReference type="PDB" id="8OJ5">
    <property type="method" value="EM"/>
    <property type="resolution" value="2.90 A"/>
    <property type="chains" value="LJ=1-178"/>
</dbReference>
<dbReference type="PDB" id="8OJ8">
    <property type="method" value="EM"/>
    <property type="resolution" value="3.30 A"/>
    <property type="chains" value="LJ=1-178"/>
</dbReference>
<dbReference type="PDB" id="8QFD">
    <property type="method" value="EM"/>
    <property type="resolution" value="2.20 A"/>
    <property type="chains" value="J=1-178"/>
</dbReference>
<dbReference type="PDB" id="8QOI">
    <property type="method" value="EM"/>
    <property type="resolution" value="1.90 A"/>
    <property type="chains" value="LJ=1-178"/>
</dbReference>
<dbReference type="PDB" id="8QYX">
    <property type="method" value="EM"/>
    <property type="resolution" value="1.78 A"/>
    <property type="chains" value="E1=1-178"/>
</dbReference>
<dbReference type="PDB" id="8RL2">
    <property type="method" value="EM"/>
    <property type="resolution" value="2.84 A"/>
    <property type="chains" value="LJ=1-178"/>
</dbReference>
<dbReference type="PDB" id="8UKB">
    <property type="method" value="EM"/>
    <property type="resolution" value="3.05 A"/>
    <property type="chains" value="LJ=3-178"/>
</dbReference>
<dbReference type="PDB" id="8XSX">
    <property type="method" value="EM"/>
    <property type="resolution" value="2.40 A"/>
    <property type="chains" value="LJ=1-178"/>
</dbReference>
<dbReference type="PDB" id="8XSY">
    <property type="method" value="EM"/>
    <property type="resolution" value="3.00 A"/>
    <property type="chains" value="LJ=1-178"/>
</dbReference>
<dbReference type="PDB" id="8XSZ">
    <property type="method" value="EM"/>
    <property type="resolution" value="3.20 A"/>
    <property type="chains" value="LJ=1-178"/>
</dbReference>
<dbReference type="PDB" id="8Y0W">
    <property type="method" value="EM"/>
    <property type="resolution" value="3.40 A"/>
    <property type="chains" value="LJ=1-178"/>
</dbReference>
<dbReference type="PDB" id="8Y0X">
    <property type="method" value="EM"/>
    <property type="resolution" value="3.30 A"/>
    <property type="chains" value="LJ=1-178"/>
</dbReference>
<dbReference type="PDB" id="8YOO">
    <property type="method" value="EM"/>
    <property type="resolution" value="2.00 A"/>
    <property type="chains" value="LJ=1-178"/>
</dbReference>
<dbReference type="PDB" id="8YOP">
    <property type="method" value="EM"/>
    <property type="resolution" value="2.20 A"/>
    <property type="chains" value="LJ=1-178"/>
</dbReference>
<dbReference type="PDB" id="9C3H">
    <property type="method" value="EM"/>
    <property type="resolution" value="2.00 A"/>
    <property type="chains" value="LJ=1-178"/>
</dbReference>
<dbReference type="PDB" id="9G8M">
    <property type="method" value="EM"/>
    <property type="resolution" value="3.30 A"/>
    <property type="chains" value="LJ=1-178"/>
</dbReference>
<dbReference type="PDB" id="9GMO">
    <property type="method" value="EM"/>
    <property type="resolution" value="2.59 A"/>
    <property type="chains" value="q=1-178"/>
</dbReference>
<dbReference type="PDBsum" id="4UG0"/>
<dbReference type="PDBsum" id="4V6X"/>
<dbReference type="PDBsum" id="4XXB"/>
<dbReference type="PDBsum" id="5AJ0"/>
<dbReference type="PDBsum" id="5LKS"/>
<dbReference type="PDBsum" id="5T2C"/>
<dbReference type="PDBsum" id="6IP5"/>
<dbReference type="PDBsum" id="6IP6"/>
<dbReference type="PDBsum" id="6IP8"/>
<dbReference type="PDBsum" id="6LQM"/>
<dbReference type="PDBsum" id="6LSR"/>
<dbReference type="PDBsum" id="6LSS"/>
<dbReference type="PDBsum" id="6LU8"/>
<dbReference type="PDBsum" id="6OLE"/>
<dbReference type="PDBsum" id="6OLF"/>
<dbReference type="PDBsum" id="6OLG"/>
<dbReference type="PDBsum" id="6OLI"/>
<dbReference type="PDBsum" id="6OLZ"/>
<dbReference type="PDBsum" id="6OM0"/>
<dbReference type="PDBsum" id="6OM7"/>
<dbReference type="PDBsum" id="6QZP"/>
<dbReference type="PDBsum" id="6W6L"/>
<dbReference type="PDBsum" id="6XA1"/>
<dbReference type="PDBsum" id="6Y0G"/>
<dbReference type="PDBsum" id="6Y2L"/>
<dbReference type="PDBsum" id="6Y57"/>
<dbReference type="PDBsum" id="6Y6X"/>
<dbReference type="PDBsum" id="6Z6L"/>
<dbReference type="PDBsum" id="6Z6M"/>
<dbReference type="PDBsum" id="6Z6N"/>
<dbReference type="PDBsum" id="6ZM7"/>
<dbReference type="PDBsum" id="6ZME"/>
<dbReference type="PDBsum" id="6ZMI"/>
<dbReference type="PDBsum" id="6ZMO"/>
<dbReference type="PDBsum" id="7BHP"/>
<dbReference type="PDBsum" id="7F5S"/>
<dbReference type="PDBsum" id="7OW7"/>
<dbReference type="PDBsum" id="7QVP"/>
<dbReference type="PDBsum" id="7XNX"/>
<dbReference type="PDBsum" id="7XNY"/>
<dbReference type="PDBsum" id="8A3D"/>
<dbReference type="PDBsum" id="8BGU"/>
<dbReference type="PDBsum" id="8FL0"/>
<dbReference type="PDBsum" id="8FL2"/>
<dbReference type="PDBsum" id="8FL3"/>
<dbReference type="PDBsum" id="8FL4"/>
<dbReference type="PDBsum" id="8FL6"/>
<dbReference type="PDBsum" id="8FL7"/>
<dbReference type="PDBsum" id="8FL9"/>
<dbReference type="PDBsum" id="8FLA"/>
<dbReference type="PDBsum" id="8FLB"/>
<dbReference type="PDBsum" id="8FLC"/>
<dbReference type="PDBsum" id="8FLD"/>
<dbReference type="PDBsum" id="8FLE"/>
<dbReference type="PDBsum" id="8FLF"/>
<dbReference type="PDBsum" id="8G5Y"/>
<dbReference type="PDBsum" id="8G5Z"/>
<dbReference type="PDBsum" id="8G60"/>
<dbReference type="PDBsum" id="8G61"/>
<dbReference type="PDBsum" id="8G6J"/>
<dbReference type="PDBsum" id="8GLP"/>
<dbReference type="PDBsum" id="8IDT"/>
<dbReference type="PDBsum" id="8IDY"/>
<dbReference type="PDBsum" id="8IE3"/>
<dbReference type="PDBsum" id="8IFD"/>
<dbReference type="PDBsum" id="8IFE"/>
<dbReference type="PDBsum" id="8INE"/>
<dbReference type="PDBsum" id="8INF"/>
<dbReference type="PDBsum" id="8INK"/>
<dbReference type="PDBsum" id="8IPD"/>
<dbReference type="PDBsum" id="8IPX"/>
<dbReference type="PDBsum" id="8IPY"/>
<dbReference type="PDBsum" id="8IR1"/>
<dbReference type="PDBsum" id="8IR3"/>
<dbReference type="PDBsum" id="8JDJ"/>
<dbReference type="PDBsum" id="8JDK"/>
<dbReference type="PDBsum" id="8JDL"/>
<dbReference type="PDBsum" id="8JDM"/>
<dbReference type="PDBsum" id="8K2C"/>
<dbReference type="PDBsum" id="8OHD"/>
<dbReference type="PDBsum" id="8OJ0"/>
<dbReference type="PDBsum" id="8OJ5"/>
<dbReference type="PDBsum" id="8OJ8"/>
<dbReference type="PDBsum" id="8QFD"/>
<dbReference type="PDBsum" id="8QOI"/>
<dbReference type="PDBsum" id="8QYX"/>
<dbReference type="PDBsum" id="8RL2"/>
<dbReference type="PDBsum" id="8UKB"/>
<dbReference type="PDBsum" id="8XSX"/>
<dbReference type="PDBsum" id="8XSY"/>
<dbReference type="PDBsum" id="8XSZ"/>
<dbReference type="PDBsum" id="8Y0W"/>
<dbReference type="PDBsum" id="8Y0X"/>
<dbReference type="PDBsum" id="8YOO"/>
<dbReference type="PDBsum" id="8YOP"/>
<dbReference type="PDBsum" id="9C3H"/>
<dbReference type="PDBsum" id="9G8M"/>
<dbReference type="PDBsum" id="9GMO"/>
<dbReference type="EMDB" id="EMD-0948"/>
<dbReference type="EMDB" id="EMD-0963"/>
<dbReference type="EMDB" id="EMD-0964"/>
<dbReference type="EMDB" id="EMD-0978"/>
<dbReference type="EMDB" id="EMD-10668"/>
<dbReference type="EMDB" id="EMD-10674"/>
<dbReference type="EMDB" id="EMD-10690"/>
<dbReference type="EMDB" id="EMD-10709"/>
<dbReference type="EMDB" id="EMD-11098"/>
<dbReference type="EMDB" id="EMD-11099"/>
<dbReference type="EMDB" id="EMD-11100"/>
<dbReference type="EMDB" id="EMD-11288"/>
<dbReference type="EMDB" id="EMD-11289"/>
<dbReference type="EMDB" id="EMD-11292"/>
<dbReference type="EMDB" id="EMD-11299"/>
<dbReference type="EMDB" id="EMD-12189"/>
<dbReference type="EMDB" id="EMD-13094"/>
<dbReference type="EMDB" id="EMD-14181"/>
<dbReference type="EMDB" id="EMD-15113"/>
<dbReference type="EMDB" id="EMD-16036"/>
<dbReference type="EMDB" id="EMD-16880"/>
<dbReference type="EMDB" id="EMD-16902"/>
<dbReference type="EMDB" id="EMD-16905"/>
<dbReference type="EMDB" id="EMD-16908"/>
<dbReference type="EMDB" id="EMD-18382"/>
<dbReference type="EMDB" id="EMD-18539"/>
<dbReference type="EMDB" id="EMD-18765"/>
<dbReference type="EMDB" id="EMD-19330"/>
<dbReference type="EMDB" id="EMD-29263"/>
<dbReference type="EMDB" id="EMD-29265"/>
<dbReference type="EMDB" id="EMD-29266"/>
<dbReference type="EMDB" id="EMD-29267"/>
<dbReference type="EMDB" id="EMD-29268"/>
<dbReference type="EMDB" id="EMD-29269"/>
<dbReference type="EMDB" id="EMD-29271"/>
<dbReference type="EMDB" id="EMD-29272"/>
<dbReference type="EMDB" id="EMD-29273"/>
<dbReference type="EMDB" id="EMD-29274"/>
<dbReference type="EMDB" id="EMD-29275"/>
<dbReference type="EMDB" id="EMD-29276"/>
<dbReference type="EMDB" id="EMD-29277"/>
<dbReference type="EMDB" id="EMD-29757"/>
<dbReference type="EMDB" id="EMD-29758"/>
<dbReference type="EMDB" id="EMD-29759"/>
<dbReference type="EMDB" id="EMD-29760"/>
<dbReference type="EMDB" id="EMD-29771"/>
<dbReference type="EMDB" id="EMD-31465"/>
<dbReference type="EMDB" id="EMD-33329"/>
<dbReference type="EMDB" id="EMD-33330"/>
<dbReference type="EMDB" id="EMD-35370"/>
<dbReference type="EMDB" id="EMD-35371"/>
<dbReference type="EMDB" id="EMD-35375"/>
<dbReference type="EMDB" id="EMD-35413"/>
<dbReference type="EMDB" id="EMD-35414"/>
<dbReference type="EMDB" id="EMD-35596"/>
<dbReference type="EMDB" id="EMD-35597"/>
<dbReference type="EMDB" id="EMD-35599"/>
<dbReference type="EMDB" id="EMD-35639"/>
<dbReference type="EMDB" id="EMD-35649"/>
<dbReference type="EMDB" id="EMD-35651"/>
<dbReference type="EMDB" id="EMD-35672"/>
<dbReference type="EMDB" id="EMD-35673"/>
<dbReference type="EMDB" id="EMD-36178"/>
<dbReference type="EMDB" id="EMD-36179"/>
<dbReference type="EMDB" id="EMD-36180"/>
<dbReference type="EMDB" id="EMD-36181"/>
<dbReference type="EMDB" id="EMD-36838"/>
<dbReference type="EMDB" id="EMD-38629"/>
<dbReference type="EMDB" id="EMD-38630"/>
<dbReference type="EMDB" id="EMD-38631"/>
<dbReference type="EMDB" id="EMD-3883"/>
<dbReference type="EMDB" id="EMD-39455"/>
<dbReference type="EMDB" id="EMD-39456"/>
<dbReference type="EMDB" id="EMD-40205"/>
<dbReference type="EMDB" id="EMD-4070"/>
<dbReference type="EMDB" id="EMD-42351"/>
<dbReference type="EMDB" id="EMD-45170"/>
<dbReference type="EMDB" id="EMD-51132"/>
<dbReference type="EMDB" id="EMD-51452"/>
<dbReference type="EMDB" id="EMD-9701"/>
<dbReference type="EMDB" id="EMD-9702"/>
<dbReference type="EMDB" id="EMD-9703"/>
<dbReference type="SMR" id="P62913"/>
<dbReference type="BioGRID" id="112055">
    <property type="interactions" value="683"/>
</dbReference>
<dbReference type="ComplexPortal" id="CPX-5183">
    <property type="entry name" value="60S cytosolic large ribosomal subunit"/>
</dbReference>
<dbReference type="ComplexPortal" id="CPX-7664">
    <property type="entry name" value="60S cytosolic large ribosomal subunit, testis-specific variant"/>
</dbReference>
<dbReference type="ComplexPortal" id="CPX-7665">
    <property type="entry name" value="60S cytosolic large ribosomal subunit, striated muscle variant"/>
</dbReference>
<dbReference type="CORUM" id="P62913"/>
<dbReference type="FunCoup" id="P62913">
    <property type="interactions" value="1542"/>
</dbReference>
<dbReference type="IntAct" id="P62913">
    <property type="interactions" value="374"/>
</dbReference>
<dbReference type="MINT" id="P62913"/>
<dbReference type="STRING" id="9606.ENSP00000496250"/>
<dbReference type="DrugBank" id="DB02494">
    <property type="generic name" value="(S)-3-phenyllactic acid"/>
</dbReference>
<dbReference type="DrugBank" id="DB07374">
    <property type="generic name" value="Anisomycin"/>
</dbReference>
<dbReference type="DrugBank" id="DB08437">
    <property type="generic name" value="Puromycin"/>
</dbReference>
<dbReference type="MoonProt" id="P62913"/>
<dbReference type="GlyGen" id="P62913">
    <property type="glycosylation" value="1 site, 1 O-linked glycan (1 site)"/>
</dbReference>
<dbReference type="iPTMnet" id="P62913"/>
<dbReference type="MetOSite" id="P62913"/>
<dbReference type="PhosphoSitePlus" id="P62913"/>
<dbReference type="SwissPalm" id="P62913"/>
<dbReference type="BioMuta" id="RPL11"/>
<dbReference type="DMDM" id="51702795"/>
<dbReference type="jPOST" id="P62913"/>
<dbReference type="MassIVE" id="P62913"/>
<dbReference type="PaxDb" id="9606-ENSP00000363676"/>
<dbReference type="PeptideAtlas" id="P62913"/>
<dbReference type="ProteomicsDB" id="57452"/>
<dbReference type="ProteomicsDB" id="57453">
    <molecule id="P62913-2"/>
</dbReference>
<dbReference type="Pumba" id="P62913"/>
<dbReference type="TopDownProteomics" id="P62913-1">
    <molecule id="P62913-1"/>
</dbReference>
<dbReference type="Antibodypedia" id="1241">
    <property type="antibodies" value="327 antibodies from 32 providers"/>
</dbReference>
<dbReference type="DNASU" id="6135"/>
<dbReference type="Ensembl" id="ENST00000374550.8">
    <molecule id="P62913-2"/>
    <property type="protein sequence ID" value="ENSP00000363676.4"/>
    <property type="gene ID" value="ENSG00000142676.14"/>
</dbReference>
<dbReference type="Ensembl" id="ENST00000643754.2">
    <molecule id="P62913-1"/>
    <property type="protein sequence ID" value="ENSP00000496250.1"/>
    <property type="gene ID" value="ENSG00000142676.14"/>
</dbReference>
<dbReference type="GeneID" id="6135"/>
<dbReference type="KEGG" id="hsa:6135"/>
<dbReference type="MANE-Select" id="ENST00000643754.2">
    <property type="protein sequence ID" value="ENSP00000496250.1"/>
    <property type="RefSeq nucleotide sequence ID" value="NM_000975.5"/>
    <property type="RefSeq protein sequence ID" value="NP_000966.2"/>
</dbReference>
<dbReference type="AGR" id="HGNC:10301"/>
<dbReference type="CTD" id="6135"/>
<dbReference type="DisGeNET" id="6135"/>
<dbReference type="GeneCards" id="RPL11"/>
<dbReference type="GeneReviews" id="RPL11"/>
<dbReference type="HGNC" id="HGNC:10301">
    <property type="gene designation" value="RPL11"/>
</dbReference>
<dbReference type="HPA" id="ENSG00000142676">
    <property type="expression patterns" value="Low tissue specificity"/>
</dbReference>
<dbReference type="MalaCards" id="RPL11"/>
<dbReference type="MIM" id="604175">
    <property type="type" value="gene"/>
</dbReference>
<dbReference type="MIM" id="612562">
    <property type="type" value="phenotype"/>
</dbReference>
<dbReference type="neXtProt" id="NX_P62913"/>
<dbReference type="OpenTargets" id="ENSG00000142676"/>
<dbReference type="Orphanet" id="124">
    <property type="disease" value="Diamond-Blackfan anemia"/>
</dbReference>
<dbReference type="PharmGKB" id="PA34664"/>
<dbReference type="VEuPathDB" id="HostDB:ENSG00000142676"/>
<dbReference type="eggNOG" id="KOG0397">
    <property type="taxonomic scope" value="Eukaryota"/>
</dbReference>
<dbReference type="GeneTree" id="ENSGT00910000144211"/>
<dbReference type="HOGENOM" id="CLU_061015_3_0_1"/>
<dbReference type="InParanoid" id="P62913"/>
<dbReference type="OMA" id="NPMKELK"/>
<dbReference type="OrthoDB" id="1734943at2759"/>
<dbReference type="PAN-GO" id="P62913">
    <property type="GO annotations" value="3 GO annotations based on evolutionary models"/>
</dbReference>
<dbReference type="PhylomeDB" id="P62913"/>
<dbReference type="TreeFam" id="TF300017"/>
<dbReference type="PathwayCommons" id="P62913"/>
<dbReference type="Reactome" id="R-HSA-156827">
    <property type="pathway name" value="L13a-mediated translational silencing of Ceruloplasmin expression"/>
</dbReference>
<dbReference type="Reactome" id="R-HSA-156902">
    <property type="pathway name" value="Peptide chain elongation"/>
</dbReference>
<dbReference type="Reactome" id="R-HSA-1799339">
    <property type="pathway name" value="SRP-dependent cotranslational protein targeting to membrane"/>
</dbReference>
<dbReference type="Reactome" id="R-HSA-192823">
    <property type="pathway name" value="Viral mRNA Translation"/>
</dbReference>
<dbReference type="Reactome" id="R-HSA-2408557">
    <property type="pathway name" value="Selenocysteine synthesis"/>
</dbReference>
<dbReference type="Reactome" id="R-HSA-6791226">
    <property type="pathway name" value="Major pathway of rRNA processing in the nucleolus and cytosol"/>
</dbReference>
<dbReference type="Reactome" id="R-HSA-72689">
    <property type="pathway name" value="Formation of a pool of free 40S subunits"/>
</dbReference>
<dbReference type="Reactome" id="R-HSA-72706">
    <property type="pathway name" value="GTP hydrolysis and joining of the 60S ribosomal subunit"/>
</dbReference>
<dbReference type="Reactome" id="R-HSA-72764">
    <property type="pathway name" value="Eukaryotic Translation Termination"/>
</dbReference>
<dbReference type="Reactome" id="R-HSA-9010553">
    <property type="pathway name" value="Regulation of expression of SLITs and ROBOs"/>
</dbReference>
<dbReference type="Reactome" id="R-HSA-9633012">
    <property type="pathway name" value="Response of EIF2AK4 (GCN2) to amino acid deficiency"/>
</dbReference>
<dbReference type="Reactome" id="R-HSA-975956">
    <property type="pathway name" value="Nonsense Mediated Decay (NMD) independent of the Exon Junction Complex (EJC)"/>
</dbReference>
<dbReference type="Reactome" id="R-HSA-975957">
    <property type="pathway name" value="Nonsense Mediated Decay (NMD) enhanced by the Exon Junction Complex (EJC)"/>
</dbReference>
<dbReference type="SignaLink" id="P62913"/>
<dbReference type="SIGNOR" id="P62913"/>
<dbReference type="BioGRID-ORCS" id="6135">
    <property type="hits" value="870 hits in 1159 CRISPR screens"/>
</dbReference>
<dbReference type="CD-CODE" id="232F8A39">
    <property type="entry name" value="P-body"/>
</dbReference>
<dbReference type="CD-CODE" id="91857CE7">
    <property type="entry name" value="Nucleolus"/>
</dbReference>
<dbReference type="CD-CODE" id="DEE660B4">
    <property type="entry name" value="Stress granule"/>
</dbReference>
<dbReference type="ChiTaRS" id="RPL11">
    <property type="organism name" value="human"/>
</dbReference>
<dbReference type="EvolutionaryTrace" id="P62913"/>
<dbReference type="GeneWiki" id="RPL11"/>
<dbReference type="GenomeRNAi" id="6135"/>
<dbReference type="Pharos" id="P62913">
    <property type="development level" value="Tbio"/>
</dbReference>
<dbReference type="PRO" id="PR:P62913"/>
<dbReference type="Proteomes" id="UP000005640">
    <property type="component" value="Chromosome 1"/>
</dbReference>
<dbReference type="RNAct" id="P62913">
    <property type="molecule type" value="protein"/>
</dbReference>
<dbReference type="Bgee" id="ENSG00000142676">
    <property type="expression patterns" value="Expressed in ganglionic eminence and 210 other cell types or tissues"/>
</dbReference>
<dbReference type="ExpressionAtlas" id="P62913">
    <property type="expression patterns" value="baseline and differential"/>
</dbReference>
<dbReference type="GO" id="GO:0005737">
    <property type="term" value="C:cytoplasm"/>
    <property type="evidence" value="ECO:0000314"/>
    <property type="project" value="UniProtKB"/>
</dbReference>
<dbReference type="GO" id="GO:0005829">
    <property type="term" value="C:cytosol"/>
    <property type="evidence" value="ECO:0000304"/>
    <property type="project" value="Reactome"/>
</dbReference>
<dbReference type="GO" id="GO:0022625">
    <property type="term" value="C:cytosolic large ribosomal subunit"/>
    <property type="evidence" value="ECO:0000314"/>
    <property type="project" value="UniProtKB"/>
</dbReference>
<dbReference type="GO" id="GO:0022626">
    <property type="term" value="C:cytosolic ribosome"/>
    <property type="evidence" value="ECO:0000314"/>
    <property type="project" value="FlyBase"/>
</dbReference>
<dbReference type="GO" id="GO:0070062">
    <property type="term" value="C:extracellular exosome"/>
    <property type="evidence" value="ECO:0007005"/>
    <property type="project" value="UniProtKB"/>
</dbReference>
<dbReference type="GO" id="GO:0016020">
    <property type="term" value="C:membrane"/>
    <property type="evidence" value="ECO:0007005"/>
    <property type="project" value="UniProtKB"/>
</dbReference>
<dbReference type="GO" id="GO:0005730">
    <property type="term" value="C:nucleolus"/>
    <property type="evidence" value="ECO:0000314"/>
    <property type="project" value="UniProtKB"/>
</dbReference>
<dbReference type="GO" id="GO:0005654">
    <property type="term" value="C:nucleoplasm"/>
    <property type="evidence" value="ECO:0000314"/>
    <property type="project" value="UniProtKB"/>
</dbReference>
<dbReference type="GO" id="GO:0032991">
    <property type="term" value="C:protein-containing complex"/>
    <property type="evidence" value="ECO:0000314"/>
    <property type="project" value="CAFA"/>
</dbReference>
<dbReference type="GO" id="GO:0008097">
    <property type="term" value="F:5S rRNA binding"/>
    <property type="evidence" value="ECO:0000315"/>
    <property type="project" value="CAFA"/>
</dbReference>
<dbReference type="GO" id="GO:0003723">
    <property type="term" value="F:RNA binding"/>
    <property type="evidence" value="ECO:0007005"/>
    <property type="project" value="UniProtKB"/>
</dbReference>
<dbReference type="GO" id="GO:0003735">
    <property type="term" value="F:structural constituent of ribosome"/>
    <property type="evidence" value="ECO:0000314"/>
    <property type="project" value="UniProtKB"/>
</dbReference>
<dbReference type="GO" id="GO:1990948">
    <property type="term" value="F:ubiquitin ligase inhibitor activity"/>
    <property type="evidence" value="ECO:0000315"/>
    <property type="project" value="CAFA"/>
</dbReference>
<dbReference type="GO" id="GO:0031625">
    <property type="term" value="F:ubiquitin protein ligase binding"/>
    <property type="evidence" value="ECO:0000353"/>
    <property type="project" value="CAFA"/>
</dbReference>
<dbReference type="GO" id="GO:0002181">
    <property type="term" value="P:cytoplasmic translation"/>
    <property type="evidence" value="ECO:0000314"/>
    <property type="project" value="UniProtKB"/>
</dbReference>
<dbReference type="GO" id="GO:0032435">
    <property type="term" value="P:negative regulation of proteasomal ubiquitin-dependent protein catabolic process"/>
    <property type="evidence" value="ECO:0000250"/>
    <property type="project" value="UniProtKB"/>
</dbReference>
<dbReference type="GO" id="GO:2000435">
    <property type="term" value="P:negative regulation of protein neddylation"/>
    <property type="evidence" value="ECO:0000314"/>
    <property type="project" value="CAFA"/>
</dbReference>
<dbReference type="GO" id="GO:1904667">
    <property type="term" value="P:negative regulation of ubiquitin protein ligase activity"/>
    <property type="evidence" value="ECO:0000315"/>
    <property type="project" value="CAFA"/>
</dbReference>
<dbReference type="GO" id="GO:2000059">
    <property type="term" value="P:negative regulation of ubiquitin-dependent protein catabolic process"/>
    <property type="evidence" value="ECO:0000315"/>
    <property type="project" value="CAFA"/>
</dbReference>
<dbReference type="GO" id="GO:0010628">
    <property type="term" value="P:positive regulation of gene expression"/>
    <property type="evidence" value="ECO:0000314"/>
    <property type="project" value="CAFA"/>
</dbReference>
<dbReference type="GO" id="GO:0032092">
    <property type="term" value="P:positive regulation of protein binding"/>
    <property type="evidence" value="ECO:0000315"/>
    <property type="project" value="CAFA"/>
</dbReference>
<dbReference type="GO" id="GO:1901798">
    <property type="term" value="P:positive regulation of signal transduction by p53 class mediator"/>
    <property type="evidence" value="ECO:0007669"/>
    <property type="project" value="Ensembl"/>
</dbReference>
<dbReference type="GO" id="GO:0034504">
    <property type="term" value="P:protein localization to nucleus"/>
    <property type="evidence" value="ECO:0000250"/>
    <property type="project" value="UniProtKB"/>
</dbReference>
<dbReference type="GO" id="GO:0050821">
    <property type="term" value="P:protein stabilization"/>
    <property type="evidence" value="ECO:0000315"/>
    <property type="project" value="CAFA"/>
</dbReference>
<dbReference type="GO" id="GO:0006605">
    <property type="term" value="P:protein targeting"/>
    <property type="evidence" value="ECO:0000315"/>
    <property type="project" value="UniProtKB"/>
</dbReference>
<dbReference type="GO" id="GO:1901796">
    <property type="term" value="P:regulation of signal transduction by p53 class mediator"/>
    <property type="evidence" value="ECO:0000315"/>
    <property type="project" value="UniProtKB"/>
</dbReference>
<dbReference type="GO" id="GO:0000027">
    <property type="term" value="P:ribosomal large subunit assembly"/>
    <property type="evidence" value="ECO:0000315"/>
    <property type="project" value="UniProtKB"/>
</dbReference>
<dbReference type="GO" id="GO:0042273">
    <property type="term" value="P:ribosomal large subunit biogenesis"/>
    <property type="evidence" value="ECO:0000315"/>
    <property type="project" value="UniProtKB"/>
</dbReference>
<dbReference type="GO" id="GO:0006364">
    <property type="term" value="P:rRNA processing"/>
    <property type="evidence" value="ECO:0000315"/>
    <property type="project" value="UniProtKB"/>
</dbReference>
<dbReference type="GO" id="GO:0006412">
    <property type="term" value="P:translation"/>
    <property type="evidence" value="ECO:0000318"/>
    <property type="project" value="GO_Central"/>
</dbReference>
<dbReference type="FunFam" id="3.30.1440.10:FF:000002">
    <property type="entry name" value="60S ribosomal protein L11"/>
    <property type="match status" value="1"/>
</dbReference>
<dbReference type="Gene3D" id="3.30.1440.10">
    <property type="match status" value="1"/>
</dbReference>
<dbReference type="InterPro" id="IPR002132">
    <property type="entry name" value="Ribosomal_uL5"/>
</dbReference>
<dbReference type="InterPro" id="IPR031309">
    <property type="entry name" value="Ribosomal_uL5_C"/>
</dbReference>
<dbReference type="InterPro" id="IPR020929">
    <property type="entry name" value="Ribosomal_uL5_CS"/>
</dbReference>
<dbReference type="InterPro" id="IPR022803">
    <property type="entry name" value="Ribosomal_uL5_dom_sf"/>
</dbReference>
<dbReference type="InterPro" id="IPR031310">
    <property type="entry name" value="Ribosomal_uL5_N"/>
</dbReference>
<dbReference type="NCBIfam" id="NF003258">
    <property type="entry name" value="PRK04219.1"/>
    <property type="match status" value="1"/>
</dbReference>
<dbReference type="PANTHER" id="PTHR11994">
    <property type="entry name" value="60S RIBOSOMAL PROTEIN L11-RELATED"/>
    <property type="match status" value="1"/>
</dbReference>
<dbReference type="Pfam" id="PF00281">
    <property type="entry name" value="Ribosomal_L5"/>
    <property type="match status" value="1"/>
</dbReference>
<dbReference type="Pfam" id="PF00673">
    <property type="entry name" value="Ribosomal_L5_C"/>
    <property type="match status" value="1"/>
</dbReference>
<dbReference type="PIRSF" id="PIRSF002161">
    <property type="entry name" value="Ribosomal_L5"/>
    <property type="match status" value="1"/>
</dbReference>
<dbReference type="SUPFAM" id="SSF55282">
    <property type="entry name" value="RL5-like"/>
    <property type="match status" value="1"/>
</dbReference>
<dbReference type="PROSITE" id="PS00358">
    <property type="entry name" value="RIBOSOMAL_L5"/>
    <property type="match status" value="1"/>
</dbReference>
<comment type="function">
    <text evidence="1 2 3 4 5 8">Component of the ribosome, a large ribonucleoprotein complex responsible for the synthesis of proteins in the cell (PubMed:19191325, PubMed:32669547). The small ribosomal subunit (SSU) binds messenger RNAs (mRNAs) and translates the encoded message by selecting cognate aminoacyl-transfer RNA (tRNA) molecules (PubMed:19191325, PubMed:32669547). The large subunit (LSU) contains the ribosomal catalytic site termed the peptidyl transferase center (PTC), which catalyzes the formation of peptide bonds, thereby polymerizing the amino acids delivered by tRNAs into a polypeptide chain (PubMed:19191325, PubMed:32669547). The nascent polypeptides leave the ribosome through a tunnel in the LSU and interact with protein factors that function in enzymatic processing, targeting, and the membrane insertion of nascent chains at the exit of the ribosomal tunnel (PubMed:19191325, PubMed:32669547). As part of the 5S RNP/5S ribonucleoprotein particle it is an essential component of the LSU, required for its formation and the maturation of rRNAs (PubMed:12962325, PubMed:19061985, PubMed:24120868). It also couples ribosome biogenesis to p53/TP53 activation. As part of the 5S RNP it accumulates in the nucleoplasm and inhibits MDM2, when ribosome biogenesis is perturbed, mediating the stabilization and the activation of TP53 (PubMed:24120868). Promotes nucleolar location of PML (By similarity).</text>
</comment>
<comment type="subunit">
    <text evidence="1 4 5 6 7 8 9">Component of the large ribosomal subunit (LSU) (PubMed:19191325, PubMed:32669547). Part of the 5S RNP complex, which is a LSU subcomplex composed of the 5S RNA, RPL5 and RPL11 (PubMed:24120868, PubMed:37291423). Component of a hexameric 5S RNP precursor complex, composed of 5S RNA, RRS1, RPF2/BXDC1, RPL5, RPL11 and HEATR3; this complex acts as a precursor for ribosome assembly (PubMed:37291423). Interacts with PML (By similarity). Interacts with MDM2 (via its RanBP2-type zinc finger domain); negatively regulates MDM2-mediated TP53 ubiquitination and degradation (PubMed:24120868, PubMed:37291423). Interacts with NOP53; retains RPL11 into the nucleolus (PubMed:24556985, PubMed:27829214).</text>
</comment>
<comment type="interaction">
    <interactant intactId="EBI-354380">
        <id>P62913</id>
    </interactant>
    <interactant intactId="EBI-1058722">
        <id>Q13554</id>
        <label>CAMK2B</label>
    </interactant>
    <organismsDiffer>false</organismsDiffer>
    <experiments>3</experiments>
</comment>
<comment type="interaction">
    <interactant intactId="EBI-354380">
        <id>P62913</id>
    </interactant>
    <interactant intactId="EBI-352572">
        <id>P08238</id>
        <label>HSP90AB1</label>
    </interactant>
    <organismsDiffer>false</organismsDiffer>
    <experiments>2</experiments>
</comment>
<comment type="interaction">
    <interactant intactId="EBI-354380">
        <id>P62913</id>
    </interactant>
    <interactant intactId="EBI-10171697">
        <id>Q6A162</id>
        <label>KRT40</label>
    </interactant>
    <organismsDiffer>false</organismsDiffer>
    <experiments>3</experiments>
</comment>
<comment type="interaction">
    <interactant intactId="EBI-354380">
        <id>P62913</id>
    </interactant>
    <interactant intactId="EBI-10172290">
        <id>P60409</id>
        <label>KRTAP10-7</label>
    </interactant>
    <organismsDiffer>false</organismsDiffer>
    <experiments>3</experiments>
</comment>
<comment type="interaction">
    <interactant intactId="EBI-354380">
        <id>P62913</id>
    </interactant>
    <interactant intactId="EBI-389668">
        <id>Q00987</id>
        <label>MDM2</label>
    </interactant>
    <organismsDiffer>false</organismsDiffer>
    <experiments>13</experiments>
</comment>
<comment type="interaction">
    <interactant intactId="EBI-354380">
        <id>P62913</id>
    </interactant>
    <interactant intactId="EBI-447544">
        <id>P01106</id>
        <label>MYC</label>
    </interactant>
    <organismsDiffer>false</organismsDiffer>
    <experiments>3</experiments>
</comment>
<comment type="interaction">
    <interactant intactId="EBI-354380">
        <id>P62913</id>
    </interactant>
    <interactant intactId="EBI-716247">
        <id>Q15843</id>
        <label>NEDD8</label>
    </interactant>
    <organismsDiffer>false</organismsDiffer>
    <experiments>5</experiments>
</comment>
<comment type="interaction">
    <interactant intactId="EBI-354380">
        <id>P62913</id>
    </interactant>
    <interactant intactId="EBI-356860">
        <id>P62906</id>
        <label>RPL10A</label>
    </interactant>
    <organismsDiffer>false</organismsDiffer>
    <experiments>3</experiments>
</comment>
<comment type="interaction">
    <interactant intactId="EBI-11027771">
        <id>P62913-2</id>
    </interactant>
    <interactant intactId="EBI-739789">
        <id>Q92997</id>
        <label>DVL3</label>
    </interactant>
    <organismsDiffer>false</organismsDiffer>
    <experiments>3</experiments>
</comment>
<comment type="interaction">
    <interactant intactId="EBI-11027771">
        <id>P62913-2</id>
    </interactant>
    <interactant intactId="EBI-751911">
        <id>Q92551</id>
        <label>IP6K1</label>
    </interactant>
    <organismsDiffer>false</organismsDiffer>
    <experiments>3</experiments>
</comment>
<comment type="interaction">
    <interactant intactId="EBI-11027771">
        <id>P62913-2</id>
    </interactant>
    <interactant intactId="EBI-399080">
        <id>Q92993</id>
        <label>KAT5</label>
    </interactant>
    <organismsDiffer>false</organismsDiffer>
    <experiments>3</experiments>
</comment>
<comment type="interaction">
    <interactant intactId="EBI-11027771">
        <id>P62913-2</id>
    </interactant>
    <interactant intactId="EBI-11742507">
        <id>Q8TAP4-4</id>
        <label>LMO3</label>
    </interactant>
    <organismsDiffer>false</organismsDiffer>
    <experiments>3</experiments>
</comment>
<comment type="interaction">
    <interactant intactId="EBI-11027771">
        <id>P62913-2</id>
    </interactant>
    <interactant intactId="EBI-1051317">
        <id>Q9H4L5</id>
        <label>OSBPL3</label>
    </interactant>
    <organismsDiffer>false</organismsDiffer>
    <experiments>3</experiments>
</comment>
<comment type="interaction">
    <interactant intactId="EBI-11027771">
        <id>P62913-2</id>
    </interactant>
    <interactant intactId="EBI-9090795">
        <id>Q15047-2</id>
        <label>SETDB1</label>
    </interactant>
    <organismsDiffer>false</organismsDiffer>
    <experiments>3</experiments>
</comment>
<comment type="interaction">
    <interactant intactId="EBI-11027771">
        <id>P62913-2</id>
    </interactant>
    <interactant intactId="EBI-359832">
        <id>P61981</id>
        <label>YWHAG</label>
    </interactant>
    <organismsDiffer>false</organismsDiffer>
    <experiments>3</experiments>
</comment>
<comment type="subcellular location">
    <subcellularLocation>
        <location evidence="7">Nucleus</location>
        <location evidence="7">Nucleolus</location>
    </subcellularLocation>
    <subcellularLocation>
        <location evidence="1">Cytoplasm</location>
    </subcellularLocation>
</comment>
<comment type="alternative products">
    <event type="alternative splicing"/>
    <isoform>
        <id>P62913-1</id>
        <id>P39026-1</id>
        <name>1</name>
        <sequence type="displayed"/>
    </isoform>
    <isoform>
        <id>P62913-2</id>
        <id>P39026-2</id>
        <name>2</name>
        <sequence type="described" ref="VSP_008320"/>
    </isoform>
</comment>
<comment type="disease" evidence="3 4">
    <disease id="DI-00397">
        <name>Diamond-Blackfan anemia 7</name>
        <acronym>DBA7</acronym>
        <description>A form of Diamond-Blackfan anemia, a congenital non-regenerative hypoplastic anemia that usually presents early in infancy. Diamond-Blackfan anemia is characterized by a moderate to severe macrocytic anemia, erythroblastopenia, and an increased risk of malignancy. 30 to 40% of Diamond-Blackfan anemia patients present with short stature and congenital anomalies, the most frequent being craniofacial (Pierre-Robin syndrome and cleft palate), thumb and urogenital anomalies.</description>
        <dbReference type="MIM" id="612562"/>
    </disease>
    <text>The disease is caused by variants affecting the gene represented in this entry.</text>
</comment>
<comment type="similarity">
    <text evidence="13">Belongs to the universal ribosomal protein uL5 family.</text>
</comment>
<name>RL11_HUMAN</name>
<feature type="initiator methionine" description="Removed" evidence="2 10 22 23 25">
    <location>
        <position position="1"/>
    </location>
</feature>
<feature type="chain" id="PRO_0000125082" description="Large ribosomal subunit protein uL5">
    <location>
        <begin position="2"/>
        <end position="178"/>
    </location>
</feature>
<feature type="modified residue" description="N-acetylalanine" evidence="2 10 22 23 25">
    <location>
        <position position="2"/>
    </location>
</feature>
<feature type="modified residue" description="Phosphothreonine" evidence="20">
    <location>
        <position position="44"/>
    </location>
</feature>
<feature type="modified residue" description="Phosphothreonine" evidence="24">
    <location>
        <position position="47"/>
    </location>
</feature>
<feature type="modified residue" description="N6-acetyllysine; alternate" evidence="21">
    <location>
        <position position="52"/>
    </location>
</feature>
<feature type="modified residue" description="N6-acetyllysine" evidence="21">
    <location>
        <position position="85"/>
    </location>
</feature>
<feature type="cross-link" description="Glycyl lysine isopeptide (Lys-Gly) (interchain with G-Cter in SUMO2)" evidence="26">
    <location>
        <position position="38"/>
    </location>
</feature>
<feature type="cross-link" description="Glycyl lysine isopeptide (Lys-Gly) (interchain with G-Cter in SUMO2); alternate" evidence="26">
    <location>
        <position position="52"/>
    </location>
</feature>
<feature type="cross-link" description="Glycyl lysine isopeptide (Lys-Gly) (interchain with G-Cter in SUMO2)" evidence="26">
    <location>
        <position position="154"/>
    </location>
</feature>
<feature type="splice variant" id="VSP_008320" description="In isoform 2." evidence="11">
    <location>
        <position position="3"/>
    </location>
</feature>
<feature type="sequence variant" id="VAR_055448" description="In DBA7." evidence="4">
    <original>L</original>
    <variation>H</variation>
    <location>
        <position position="20"/>
    </location>
</feature>
<feature type="sequence variant" id="VAR_055449" description="In DBA7." evidence="3">
    <location>
        <position position="161"/>
    </location>
</feature>
<feature type="sequence conflict" description="In Ref. 1; CAA55816." evidence="13" ref="1">
    <original>D</original>
    <variation>G</variation>
    <location>
        <position position="31"/>
    </location>
</feature>
<feature type="sequence conflict" description="In Ref. 1; CAA55816." evidence="13" ref="1">
    <original>T</original>
    <variation>A</variation>
    <location>
        <position position="73"/>
    </location>
</feature>
<feature type="sequence conflict" description="In Ref. 1; CAA55816." evidence="13" ref="1">
    <original>Y</original>
    <variation>L</variation>
    <location>
        <position position="92"/>
    </location>
</feature>
<feature type="sequence conflict" description="In Ref. 1; CAA55816." evidence="13" ref="1">
    <original>K</original>
    <variation>E</variation>
    <location>
        <position position="118"/>
    </location>
</feature>
<feature type="strand" evidence="27">
    <location>
        <begin position="16"/>
        <end position="25"/>
    </location>
</feature>
<feature type="strand" evidence="27">
    <location>
        <begin position="27"/>
        <end position="30"/>
    </location>
</feature>
<feature type="helix" evidence="27">
    <location>
        <begin position="31"/>
        <end position="44"/>
    </location>
</feature>
<feature type="strand" evidence="27">
    <location>
        <begin position="49"/>
        <end position="52"/>
    </location>
</feature>
<feature type="helix" evidence="27">
    <location>
        <begin position="58"/>
        <end position="60"/>
    </location>
</feature>
<feature type="strand" evidence="27">
    <location>
        <begin position="67"/>
        <end position="74"/>
    </location>
</feature>
<feature type="helix" evidence="27">
    <location>
        <begin position="76"/>
        <end position="89"/>
    </location>
</feature>
<feature type="turn" evidence="27">
    <location>
        <begin position="90"/>
        <end position="92"/>
    </location>
</feature>
<feature type="strand" evidence="27">
    <location>
        <begin position="93"/>
        <end position="95"/>
    </location>
</feature>
<feature type="helix" evidence="27">
    <location>
        <begin position="96"/>
        <end position="98"/>
    </location>
</feature>
<feature type="strand" evidence="27">
    <location>
        <begin position="105"/>
        <end position="110"/>
    </location>
</feature>
<feature type="helix" evidence="27">
    <location>
        <begin position="112"/>
        <end position="115"/>
    </location>
</feature>
<feature type="turn" evidence="27">
    <location>
        <begin position="121"/>
        <end position="123"/>
    </location>
</feature>
<feature type="strand" evidence="27">
    <location>
        <begin position="128"/>
        <end position="135"/>
    </location>
</feature>
<feature type="helix" evidence="27">
    <location>
        <begin position="159"/>
        <end position="169"/>
    </location>
</feature>
<feature type="strand" evidence="27">
    <location>
        <begin position="173"/>
        <end position="175"/>
    </location>
</feature>
<evidence type="ECO:0000250" key="1">
    <source>
        <dbReference type="UniProtKB" id="Q9CXW4"/>
    </source>
</evidence>
<evidence type="ECO:0000269" key="2">
    <source>
    </source>
</evidence>
<evidence type="ECO:0000269" key="3">
    <source>
    </source>
</evidence>
<evidence type="ECO:0000269" key="4">
    <source>
    </source>
</evidence>
<evidence type="ECO:0000269" key="5">
    <source>
    </source>
</evidence>
<evidence type="ECO:0000269" key="6">
    <source>
    </source>
</evidence>
<evidence type="ECO:0000269" key="7">
    <source>
    </source>
</evidence>
<evidence type="ECO:0000269" key="8">
    <source>
    </source>
</evidence>
<evidence type="ECO:0000269" key="9">
    <source>
    </source>
</evidence>
<evidence type="ECO:0000269" key="10">
    <source ref="5"/>
</evidence>
<evidence type="ECO:0000303" key="11">
    <source>
    </source>
</evidence>
<evidence type="ECO:0000303" key="12">
    <source>
    </source>
</evidence>
<evidence type="ECO:0000305" key="13"/>
<evidence type="ECO:0007744" key="14">
    <source>
        <dbReference type="PDB" id="4V6X"/>
    </source>
</evidence>
<evidence type="ECO:0007744" key="15">
    <source>
        <dbReference type="PDB" id="6LQM"/>
    </source>
</evidence>
<evidence type="ECO:0007744" key="16">
    <source>
        <dbReference type="PDB" id="6LSR"/>
    </source>
</evidence>
<evidence type="ECO:0007744" key="17">
    <source>
        <dbReference type="PDB" id="6LSS"/>
    </source>
</evidence>
<evidence type="ECO:0007744" key="18">
    <source>
        <dbReference type="PDB" id="6LU8"/>
    </source>
</evidence>
<evidence type="ECO:0007744" key="19">
    <source>
        <dbReference type="PDB" id="8BGU"/>
    </source>
</evidence>
<evidence type="ECO:0007744" key="20">
    <source>
    </source>
</evidence>
<evidence type="ECO:0007744" key="21">
    <source>
    </source>
</evidence>
<evidence type="ECO:0007744" key="22">
    <source>
    </source>
</evidence>
<evidence type="ECO:0007744" key="23">
    <source>
    </source>
</evidence>
<evidence type="ECO:0007744" key="24">
    <source>
    </source>
</evidence>
<evidence type="ECO:0007744" key="25">
    <source>
    </source>
</evidence>
<evidence type="ECO:0007744" key="26">
    <source>
    </source>
</evidence>
<evidence type="ECO:0007829" key="27">
    <source>
        <dbReference type="PDB" id="4XXB"/>
    </source>
</evidence>
<organism>
    <name type="scientific">Homo sapiens</name>
    <name type="common">Human</name>
    <dbReference type="NCBI Taxonomy" id="9606"/>
    <lineage>
        <taxon>Eukaryota</taxon>
        <taxon>Metazoa</taxon>
        <taxon>Chordata</taxon>
        <taxon>Craniata</taxon>
        <taxon>Vertebrata</taxon>
        <taxon>Euteleostomi</taxon>
        <taxon>Mammalia</taxon>
        <taxon>Eutheria</taxon>
        <taxon>Euarchontoglires</taxon>
        <taxon>Primates</taxon>
        <taxon>Haplorrhini</taxon>
        <taxon>Catarrhini</taxon>
        <taxon>Hominidae</taxon>
        <taxon>Homo</taxon>
    </lineage>
</organism>
<sequence>MAQDQGEKENPMRELRIRKLCLNICVGESGDRLTRAAKVLEQLTGQTPVFSKARYTVRSFGIRRNEKIAVHCTVRGAKAEEILEKGLKVREYELRKNNFSDTGNFGFGIQEHIDLGIKYDPSIGIYGLDFYVVLGRPGFSIADKKRRTGCIGAKHRISKEEAMRWFQQKYDGIILPGK</sequence>
<gene>
    <name type="primary">RPL11</name>
</gene>
<reference key="1">
    <citation type="journal article" date="1995" name="Bioorg. Khim.">
        <title>Cloning and determination of the primary structure of DNA complementary to the mRNA of human ribosomal protein L11.</title>
        <authorList>
            <person name="Mishin V.P."/>
            <person name="Filipenko M.L."/>
            <person name="Muravlev A.I."/>
            <person name="Karpova G.G."/>
            <person name="Mertvetsov N.P."/>
        </authorList>
    </citation>
    <scope>NUCLEOTIDE SEQUENCE [MRNA] (ISOFORM 1)</scope>
</reference>
<reference key="2">
    <citation type="submission" date="1998-05" db="EMBL/GenBank/DDBJ databases">
        <title>Expressed sequence tags from a human cell line.</title>
        <authorList>
            <person name="Bhat K.S."/>
        </authorList>
    </citation>
    <scope>NUCLEOTIDE SEQUENCE [MRNA] (ISOFORM 1)</scope>
</reference>
<reference key="3">
    <citation type="journal article" date="2003" name="Mol. Biol. (Mosk.)">
        <title>Structural and functional analysis of the human ribosomal protein L11 gene.</title>
        <authorList>
            <person name="Voronina E.N."/>
            <person name="Kolokol'tsova T.D."/>
            <person name="Nechaeva E.A."/>
            <person name="Filipenko M.L."/>
        </authorList>
    </citation>
    <scope>NUCLEOTIDE SEQUENCE [GENOMIC DNA]</scope>
</reference>
<reference key="4">
    <citation type="journal article" date="2004" name="Genome Res.">
        <title>The status, quality, and expansion of the NIH full-length cDNA project: the Mammalian Gene Collection (MGC).</title>
        <authorList>
            <consortium name="The MGC Project Team"/>
        </authorList>
    </citation>
    <scope>NUCLEOTIDE SEQUENCE [LARGE SCALE MRNA] (ISOFORM 2)</scope>
    <source>
        <tissue>Tonsil</tissue>
    </source>
</reference>
<reference key="5">
    <citation type="submission" date="2005-11" db="UniProtKB">
        <authorList>
            <person name="Quadroni M."/>
            <person name="Bienvenut W.V."/>
        </authorList>
    </citation>
    <scope>PROTEIN SEQUENCE OF 2-13; 89-95; 119-145 AND 157-164</scope>
    <scope>CLEAVAGE OF INITIATOR METHIONINE</scope>
    <scope>ACETYLATION AT ALA-2</scope>
    <scope>IDENTIFICATION BY MASS SPECTROMETRY</scope>
    <source>
        <tissue>Cervix carcinoma</tissue>
    </source>
</reference>
<reference key="6">
    <citation type="submission" date="2001-10" db="EMBL/GenBank/DDBJ databases">
        <title>Identification of novel tumor antigens in CLL by SEREX: assessment of their potential as targets for immunotherapeutic approaches.</title>
        <authorList>
            <person name="Krackhardt A.M."/>
            <person name="Witzens M."/>
            <person name="Harig S."/>
            <person name="Hodi F.S."/>
            <person name="Zauls A.J."/>
            <person name="Chessia M."/>
            <person name="Barrett P."/>
            <person name="Gribben J.G."/>
        </authorList>
    </citation>
    <scope>NUCLEOTIDE SEQUENCE [MRNA] OF 3-178 (ISOFORM 1)</scope>
</reference>
<reference key="7">
    <citation type="journal article" date="1998" name="Genome Res.">
        <title>A map of 75 human ribosomal protein genes.</title>
        <authorList>
            <person name="Kenmochi N."/>
            <person name="Kawaguchi T."/>
            <person name="Rozen S."/>
            <person name="Davis E."/>
            <person name="Goodman N."/>
            <person name="Hudson T.J."/>
            <person name="Tanaka T."/>
            <person name="Page D.C."/>
        </authorList>
    </citation>
    <scope>NUCLEOTIDE SEQUENCE [GENOMIC DNA] OF 17-52</scope>
</reference>
<reference key="8">
    <citation type="journal article" date="2003" name="J. Protein Chem.">
        <title>Characterization and analysis of posttranslational modifications of the human large cytoplasmic ribosomal subunit proteins by mass spectrometry and Edman sequencing.</title>
        <authorList>
            <person name="Odintsova T.I."/>
            <person name="Muller E.C."/>
            <person name="Ivanov A.V."/>
            <person name="Egorov T.A."/>
            <person name="Bienert R."/>
            <person name="Vladimirov S.N."/>
            <person name="Kostka S."/>
            <person name="Otto A."/>
            <person name="Wittmann-Liebold B."/>
            <person name="Karpova G.G."/>
        </authorList>
    </citation>
    <scope>ACETYLATION AT ALA-2</scope>
    <scope>IDENTIFICATION BY MASS SPECTROMETRY</scope>
    <scope>FUNCTION</scope>
</reference>
<reference key="9">
    <citation type="journal article" date="2003" name="Nature">
        <title>Proteomic characterization of the human centrosome by protein correlation profiling.</title>
        <authorList>
            <person name="Andersen J.S."/>
            <person name="Wilkinson C.J."/>
            <person name="Mayor T."/>
            <person name="Mortensen P."/>
            <person name="Nigg E.A."/>
            <person name="Mann M."/>
        </authorList>
    </citation>
    <scope>IDENTIFICATION BY MASS SPECTROMETRY</scope>
    <source>
        <tissue>Lymphoblast</tissue>
    </source>
</reference>
<reference key="10">
    <citation type="journal article" date="2008" name="Am. J. Hum. Genet.">
        <title>Ribosomal protein L5 and L11 mutations are associated with cleft palate and abnormal thumbs in Diamond-Blackfan anemia patients.</title>
        <authorList>
            <person name="Gazda H.T."/>
            <person name="Sheen M.R."/>
            <person name="Vlachos A."/>
            <person name="Choesmel V."/>
            <person name="O'Donohue M.-F."/>
            <person name="Schneider H."/>
            <person name="Darras N."/>
            <person name="Hasman C."/>
            <person name="Sieff C.A."/>
            <person name="Newburger P.E."/>
            <person name="Ball S.E."/>
            <person name="Niewiadomska E."/>
            <person name="Matysiak M."/>
            <person name="Zaucha J.M."/>
            <person name="Glader B."/>
            <person name="Niemeyer C."/>
            <person name="Meerpohl J.J."/>
            <person name="Atsidaftos E."/>
            <person name="Lipton J.M."/>
            <person name="Gleizes P.-E."/>
            <person name="Beggs A.H."/>
        </authorList>
    </citation>
    <scope>FUNCTION</scope>
    <scope>VARIANT DBA7 GLU-161 DEL</scope>
</reference>
<reference key="11">
    <citation type="journal article" date="2008" name="Mol. Cell">
        <title>Kinase-selective enrichment enables quantitative phosphoproteomics of the kinome across the cell cycle.</title>
        <authorList>
            <person name="Daub H."/>
            <person name="Olsen J.V."/>
            <person name="Bairlein M."/>
            <person name="Gnad F."/>
            <person name="Oppermann F.S."/>
            <person name="Korner R."/>
            <person name="Greff Z."/>
            <person name="Keri G."/>
            <person name="Stemmann O."/>
            <person name="Mann M."/>
        </authorList>
    </citation>
    <scope>PHOSPHORYLATION [LARGE SCALE ANALYSIS] AT THR-44</scope>
    <scope>IDENTIFICATION BY MASS SPECTROMETRY [LARGE SCALE ANALYSIS]</scope>
    <source>
        <tissue>Cervix carcinoma</tissue>
    </source>
</reference>
<reference key="12">
    <citation type="journal article" date="2009" name="Science">
        <title>Lysine acetylation targets protein complexes and co-regulates major cellular functions.</title>
        <authorList>
            <person name="Choudhary C."/>
            <person name="Kumar C."/>
            <person name="Gnad F."/>
            <person name="Nielsen M.L."/>
            <person name="Rehman M."/>
            <person name="Walther T.C."/>
            <person name="Olsen J.V."/>
            <person name="Mann M."/>
        </authorList>
    </citation>
    <scope>ACETYLATION [LARGE SCALE ANALYSIS] AT LYS-52 AND LYS-85</scope>
    <scope>IDENTIFICATION BY MASS SPECTROMETRY [LARGE SCALE ANALYSIS]</scope>
</reference>
<reference key="13">
    <citation type="journal article" date="2011" name="BMC Syst. Biol.">
        <title>Initial characterization of the human central proteome.</title>
        <authorList>
            <person name="Burkard T.R."/>
            <person name="Planyavsky M."/>
            <person name="Kaupe I."/>
            <person name="Breitwieser F.P."/>
            <person name="Buerckstuemmer T."/>
            <person name="Bennett K.L."/>
            <person name="Superti-Furga G."/>
            <person name="Colinge J."/>
        </authorList>
    </citation>
    <scope>IDENTIFICATION BY MASS SPECTROMETRY [LARGE SCALE ANALYSIS]</scope>
</reference>
<reference key="14">
    <citation type="journal article" date="2012" name="Mol. Cell. Proteomics">
        <title>Comparative large-scale characterisation of plant vs. mammal proteins reveals similar and idiosyncratic N-alpha acetylation features.</title>
        <authorList>
            <person name="Bienvenut W.V."/>
            <person name="Sumpton D."/>
            <person name="Martinez A."/>
            <person name="Lilla S."/>
            <person name="Espagne C."/>
            <person name="Meinnel T."/>
            <person name="Giglione C."/>
        </authorList>
    </citation>
    <scope>ACETYLATION [LARGE SCALE ANALYSIS] AT ALA-2</scope>
    <scope>CLEAVAGE OF INITIATOR METHIONINE [LARGE SCALE ANALYSIS]</scope>
    <scope>IDENTIFICATION BY MASS SPECTROMETRY [LARGE SCALE ANALYSIS]</scope>
</reference>
<reference key="15">
    <citation type="journal article" date="2012" name="Proc. Natl. Acad. Sci. U.S.A.">
        <title>N-terminal acetylome analyses and functional insights of the N-terminal acetyltransferase NatB.</title>
        <authorList>
            <person name="Van Damme P."/>
            <person name="Lasa M."/>
            <person name="Polevoda B."/>
            <person name="Gazquez C."/>
            <person name="Elosegui-Artola A."/>
            <person name="Kim D.S."/>
            <person name="De Juan-Pardo E."/>
            <person name="Demeyer K."/>
            <person name="Hole K."/>
            <person name="Larrea E."/>
            <person name="Timmerman E."/>
            <person name="Prieto J."/>
            <person name="Arnesen T."/>
            <person name="Sherman F."/>
            <person name="Gevaert K."/>
            <person name="Aldabe R."/>
        </authorList>
    </citation>
    <scope>ACETYLATION [LARGE SCALE ANALYSIS] AT ALA-2</scope>
    <scope>CLEAVAGE OF INITIATOR METHIONINE [LARGE SCALE ANALYSIS]</scope>
    <scope>IDENTIFICATION BY MASS SPECTROMETRY [LARGE SCALE ANALYSIS]</scope>
</reference>
<reference key="16">
    <citation type="journal article" date="2013" name="Cell Rep.">
        <title>The 5S RNP couples p53 homeostasis to ribosome biogenesis and nucleolar stress.</title>
        <authorList>
            <person name="Sloan K.E."/>
            <person name="Bohnsack M.T."/>
            <person name="Watkins N.J."/>
        </authorList>
    </citation>
    <scope>FUNCTION</scope>
    <scope>SUBUNIT</scope>
    <scope>INTERACTION WITH MDM2</scope>
</reference>
<reference key="17">
    <citation type="journal article" date="2013" name="J. Proteome Res.">
        <title>Toward a comprehensive characterization of a human cancer cell phosphoproteome.</title>
        <authorList>
            <person name="Zhou H."/>
            <person name="Di Palma S."/>
            <person name="Preisinger C."/>
            <person name="Peng M."/>
            <person name="Polat A.N."/>
            <person name="Heck A.J."/>
            <person name="Mohammed S."/>
        </authorList>
    </citation>
    <scope>PHOSPHORYLATION [LARGE SCALE ANALYSIS] AT THR-47</scope>
    <scope>IDENTIFICATION BY MASS SPECTROMETRY [LARGE SCALE ANALYSIS]</scope>
    <source>
        <tissue>Cervix carcinoma</tissue>
    </source>
</reference>
<reference key="18">
    <citation type="journal article" date="2014" name="Curr. Opin. Struct. Biol.">
        <title>A new system for naming ribosomal proteins.</title>
        <authorList>
            <person name="Ban N."/>
            <person name="Beckmann R."/>
            <person name="Cate J.H.D."/>
            <person name="Dinman J.D."/>
            <person name="Dragon F."/>
            <person name="Ellis S.R."/>
            <person name="Lafontaine D.L.J."/>
            <person name="Lindahl L."/>
            <person name="Liljas A."/>
            <person name="Lipton J.M."/>
            <person name="McAlear M.A."/>
            <person name="Moore P.B."/>
            <person name="Noller H.F."/>
            <person name="Ortega J."/>
            <person name="Panse V.G."/>
            <person name="Ramakrishnan V."/>
            <person name="Spahn C.M.T."/>
            <person name="Steitz T.A."/>
            <person name="Tchorzewski M."/>
            <person name="Tollervey D."/>
            <person name="Warren A.J."/>
            <person name="Williamson J.R."/>
            <person name="Wilson D."/>
            <person name="Yonath A."/>
            <person name="Yusupov M."/>
        </authorList>
    </citation>
    <scope>NOMENCLATURE</scope>
</reference>
<reference key="19">
    <citation type="journal article" date="2014" name="J. Proteomics">
        <title>An enzyme assisted RP-RPLC approach for in-depth analysis of human liver phosphoproteome.</title>
        <authorList>
            <person name="Bian Y."/>
            <person name="Song C."/>
            <person name="Cheng K."/>
            <person name="Dong M."/>
            <person name="Wang F."/>
            <person name="Huang J."/>
            <person name="Sun D."/>
            <person name="Wang L."/>
            <person name="Ye M."/>
            <person name="Zou H."/>
        </authorList>
    </citation>
    <scope>IDENTIFICATION BY MASS SPECTROMETRY [LARGE SCALE ANALYSIS]</scope>
    <source>
        <tissue>Liver</tissue>
    </source>
</reference>
<reference key="20">
    <citation type="journal article" date="2014" name="Proc. Natl. Acad. Sci. U.S.A.">
        <title>GLTSCR2/PICT1 links mitochondrial stress and Myc signaling.</title>
        <authorList>
            <person name="Yoon J.C."/>
            <person name="Ling A.J."/>
            <person name="Isik M."/>
            <person name="Lee D.Y."/>
            <person name="Steinbaugh M.J."/>
            <person name="Sack L.M."/>
            <person name="Boduch A.N."/>
            <person name="Blackwell T.K."/>
            <person name="Sinclair D.A."/>
            <person name="Elledge S.J."/>
        </authorList>
    </citation>
    <scope>INTERACTION WITH NOP53</scope>
</reference>
<reference key="21">
    <citation type="journal article" date="2015" name="Proteomics">
        <title>N-terminome analysis of the human mitochondrial proteome.</title>
        <authorList>
            <person name="Vaca Jacome A.S."/>
            <person name="Rabilloud T."/>
            <person name="Schaeffer-Reiss C."/>
            <person name="Rompais M."/>
            <person name="Ayoub D."/>
            <person name="Lane L."/>
            <person name="Bairoch A."/>
            <person name="Van Dorsselaer A."/>
            <person name="Carapito C."/>
        </authorList>
    </citation>
    <scope>ACETYLATION [LARGE SCALE ANALYSIS] AT ALA-2</scope>
    <scope>CLEAVAGE OF INITIATOR METHIONINE [LARGE SCALE ANALYSIS]</scope>
    <scope>IDENTIFICATION BY MASS SPECTROMETRY [LARGE SCALE ANALYSIS]</scope>
</reference>
<reference key="22">
    <citation type="journal article" date="2016" name="Oncotarget">
        <title>PICT-1 is a key nucleolar sensor in DNA damage response signaling that regulates apoptosis through the RPL11-MDM2-p53 pathway.</title>
        <authorList>
            <person name="Chen H."/>
            <person name="Han L."/>
            <person name="Tsai H."/>
            <person name="Wang Z."/>
            <person name="Wu Y."/>
            <person name="Duo Y."/>
            <person name="Cao W."/>
            <person name="Chen L."/>
            <person name="Tan Z."/>
            <person name="Xu N."/>
            <person name="Huang X."/>
            <person name="Zhuang J."/>
            <person name="Huang L."/>
        </authorList>
    </citation>
    <scope>INTERACTION WITH NOP53</scope>
    <scope>SUBCELLULAR LOCATION</scope>
</reference>
<reference key="23">
    <citation type="journal article" date="2017" name="Nat. Struct. Mol. Biol.">
        <title>Site-specific mapping of the human SUMO proteome reveals co-modification with phosphorylation.</title>
        <authorList>
            <person name="Hendriks I.A."/>
            <person name="Lyon D."/>
            <person name="Young C."/>
            <person name="Jensen L.J."/>
            <person name="Vertegaal A.C."/>
            <person name="Nielsen M.L."/>
        </authorList>
    </citation>
    <scope>SUMOYLATION [LARGE SCALE ANALYSIS] AT LYS-38; LYS-52 AND LYS-154</scope>
    <scope>IDENTIFICATION BY MASS SPECTROMETRY [LARGE SCALE ANALYSIS]</scope>
</reference>
<reference evidence="14" key="24">
    <citation type="journal article" date="2013" name="Nature">
        <title>Structures of the human and Drosophila 80S ribosome.</title>
        <authorList>
            <person name="Anger A.M."/>
            <person name="Armache J.P."/>
            <person name="Berninghausen O."/>
            <person name="Habeck M."/>
            <person name="Subklewe M."/>
            <person name="Wilson D.N."/>
            <person name="Beckmann R."/>
        </authorList>
    </citation>
    <scope>STRUCTURE BY ELECTRON MICROSCOPY (5.0 ANGSTROMS) OF 80S RIBOSOME</scope>
    <scope>FUNCTION</scope>
    <scope>SUBUNIT</scope>
    <scope>SUBCELLULAR LOCATION</scope>
</reference>
<reference evidence="15 16 17 18" key="25">
    <citation type="journal article" date="2020" name="Nat. Commun.">
        <title>Structural snapshots of human pre-60S ribosomal particles before and after nuclear export.</title>
        <authorList>
            <person name="Liang X."/>
            <person name="Zuo M.Q."/>
            <person name="Zhang Y."/>
            <person name="Li N."/>
            <person name="Ma C."/>
            <person name="Dong M.Q."/>
            <person name="Gao N."/>
        </authorList>
    </citation>
    <scope>STRUCTURE BY ELECTRON MICROSCOPY (3.09 ANGSTROMS)</scope>
    <scope>FUNCTION</scope>
    <scope>SUBUNIT</scope>
</reference>
<reference evidence="19" key="26">
    <citation type="journal article" date="2023" name="Nat. Struct. Mol. Biol.">
        <title>Structure of nascent 5S RNPs at the crossroad between ribosome assembly and MDM2-p53 pathways.</title>
        <authorList>
            <person name="Castillo Duque de Estrada N.M."/>
            <person name="Thoms M."/>
            <person name="Flemming D."/>
            <person name="Hammaren H.M."/>
            <person name="Buschauer R."/>
            <person name="Ameismeier M."/>
            <person name="Bassler J."/>
            <person name="Beck M."/>
            <person name="Beckmann R."/>
            <person name="Hurt E."/>
        </authorList>
    </citation>
    <scope>STRUCTURE BY ELECTRON MICROSCOPY (4.10 ANGSTROMS) IN COMPLEX WITH MDM2; RPL5 AND 5S RNA</scope>
    <scope>INTERACTION WITH MDM2</scope>
</reference>
<reference key="27">
    <citation type="journal article" date="2009" name="Hum. Mutat.">
        <title>Identification of mutations in the ribosomal protein L5 (RPL5) and ribosomal protein L11 (RPL11) genes in Czech patients with Diamond-Blackfan anemia.</title>
        <authorList>
            <person name="Cmejla R."/>
            <person name="Cmejlova J."/>
            <person name="Handrkova H."/>
            <person name="Petrak J."/>
            <person name="Petrtylova K."/>
            <person name="Mihal V."/>
            <person name="Stary J."/>
            <person name="Cerna Z."/>
            <person name="Jabali Y."/>
            <person name="Pospisilova D."/>
        </authorList>
    </citation>
    <scope>VARIANT DBA7 HIS-20</scope>
</reference>